<keyword id="KW-0002">3D-structure</keyword>
<keyword id="KW-0106">Calcium</keyword>
<keyword id="KW-0903">Direct protein sequencing</keyword>
<keyword id="KW-0430">Lectin</keyword>
<keyword id="KW-0464">Manganese</keyword>
<keyword id="KW-0465">Mannose-binding</keyword>
<keyword id="KW-0479">Metal-binding</keyword>
<feature type="chain" id="PRO_0000105086" description="Concanavalin-Ma">
    <location>
        <begin position="1"/>
        <end position="236"/>
    </location>
</feature>
<feature type="binding site" evidence="1">
    <location>
        <position position="8"/>
    </location>
    <ligand>
        <name>Mn(2+)</name>
        <dbReference type="ChEBI" id="CHEBI:29035"/>
    </ligand>
</feature>
<feature type="binding site" evidence="1">
    <location>
        <position position="10"/>
    </location>
    <ligand>
        <name>Ca(2+)</name>
        <dbReference type="ChEBI" id="CHEBI:29108"/>
    </ligand>
</feature>
<feature type="binding site" evidence="1">
    <location>
        <position position="10"/>
    </location>
    <ligand>
        <name>Mn(2+)</name>
        <dbReference type="ChEBI" id="CHEBI:29035"/>
    </ligand>
</feature>
<feature type="binding site" evidence="1">
    <location>
        <position position="12"/>
    </location>
    <ligand>
        <name>a carbohydrate</name>
        <dbReference type="ChEBI" id="CHEBI:16646"/>
    </ligand>
</feature>
<feature type="binding site" evidence="1">
    <location>
        <position position="12"/>
    </location>
    <ligand>
        <name>Ca(2+)</name>
        <dbReference type="ChEBI" id="CHEBI:29108"/>
    </ligand>
</feature>
<feature type="binding site" evidence="1">
    <location>
        <position position="14"/>
    </location>
    <ligand>
        <name>Ca(2+)</name>
        <dbReference type="ChEBI" id="CHEBI:29108"/>
    </ligand>
</feature>
<feature type="binding site" evidence="1">
    <location>
        <position position="19"/>
    </location>
    <ligand>
        <name>Ca(2+)</name>
        <dbReference type="ChEBI" id="CHEBI:29108"/>
    </ligand>
</feature>
<feature type="binding site" evidence="1">
    <location>
        <position position="19"/>
    </location>
    <ligand>
        <name>Mn(2+)</name>
        <dbReference type="ChEBI" id="CHEBI:29035"/>
    </ligand>
</feature>
<feature type="binding site" evidence="1">
    <location>
        <position position="24"/>
    </location>
    <ligand>
        <name>Mn(2+)</name>
        <dbReference type="ChEBI" id="CHEBI:29035"/>
    </ligand>
</feature>
<feature type="binding site" evidence="1">
    <location>
        <begin position="98"/>
        <end position="99"/>
    </location>
    <ligand>
        <name>a carbohydrate</name>
        <dbReference type="ChEBI" id="CHEBI:16646"/>
    </ligand>
</feature>
<feature type="binding site" evidence="1">
    <location>
        <position position="207"/>
    </location>
    <ligand>
        <name>Ca(2+)</name>
        <dbReference type="ChEBI" id="CHEBI:29108"/>
    </ligand>
</feature>
<feature type="binding site" evidence="1">
    <location>
        <position position="227"/>
    </location>
    <ligand>
        <name>a carbohydrate</name>
        <dbReference type="ChEBI" id="CHEBI:16646"/>
    </ligand>
</feature>
<feature type="strand" evidence="4">
    <location>
        <begin position="4"/>
        <end position="10"/>
    </location>
</feature>
<feature type="helix" evidence="4">
    <location>
        <begin position="15"/>
        <end position="17"/>
    </location>
</feature>
<feature type="strand" evidence="4">
    <location>
        <begin position="24"/>
        <end position="33"/>
    </location>
</feature>
<feature type="strand" evidence="4">
    <location>
        <begin position="35"/>
        <end position="38"/>
    </location>
</feature>
<feature type="strand" evidence="4">
    <location>
        <begin position="45"/>
        <end position="54"/>
    </location>
</feature>
<feature type="turn" evidence="4">
    <location>
        <begin position="55"/>
        <end position="58"/>
    </location>
</feature>
<feature type="strand" evidence="4">
    <location>
        <begin position="59"/>
        <end position="65"/>
    </location>
</feature>
<feature type="strand" evidence="4">
    <location>
        <begin position="71"/>
        <end position="77"/>
    </location>
</feature>
<feature type="helix" evidence="4">
    <location>
        <begin position="80"/>
        <end position="82"/>
    </location>
</feature>
<feature type="strand" evidence="4">
    <location>
        <begin position="86"/>
        <end position="95"/>
    </location>
</feature>
<feature type="strand" evidence="3">
    <location>
        <begin position="97"/>
        <end position="99"/>
    </location>
</feature>
<feature type="strand" evidence="4">
    <location>
        <begin position="104"/>
        <end position="120"/>
    </location>
</feature>
<feature type="strand" evidence="4">
    <location>
        <begin position="122"/>
        <end position="131"/>
    </location>
</feature>
<feature type="strand" evidence="4">
    <location>
        <begin position="139"/>
        <end position="143"/>
    </location>
</feature>
<feature type="strand" evidence="3">
    <location>
        <begin position="149"/>
        <end position="151"/>
    </location>
</feature>
<feature type="strand" evidence="4">
    <location>
        <begin position="153"/>
        <end position="156"/>
    </location>
</feature>
<feature type="strand" evidence="4">
    <location>
        <begin position="169"/>
        <end position="176"/>
    </location>
</feature>
<feature type="strand" evidence="4">
    <location>
        <begin position="185"/>
        <end position="197"/>
    </location>
</feature>
<feature type="strand" evidence="4">
    <location>
        <begin position="201"/>
        <end position="204"/>
    </location>
</feature>
<feature type="strand" evidence="4">
    <location>
        <begin position="208"/>
        <end position="215"/>
    </location>
</feature>
<feature type="helix" evidence="4">
    <location>
        <begin position="226"/>
        <end position="228"/>
    </location>
</feature>
<feature type="turn" evidence="4">
    <location>
        <begin position="229"/>
        <end position="231"/>
    </location>
</feature>
<protein>
    <recommendedName>
        <fullName>Concanavalin-Ma</fullName>
        <shortName>Con Ma</shortName>
    </recommendedName>
</protein>
<comment type="function">
    <text>Glucose/D-mannose specific lectin.</text>
</comment>
<comment type="subunit">
    <text>Homotetramer.</text>
</comment>
<comment type="miscellaneous">
    <text>Binds one manganese (or another transition metal) ion and one calcium ion. The metal ions are essential for the saccharide-binding and cell-agglutinating activities.</text>
</comment>
<comment type="similarity">
    <text evidence="2">Belongs to the leguminous lectin family.</text>
</comment>
<dbReference type="PIR" id="B45587">
    <property type="entry name" value="B45587"/>
</dbReference>
<dbReference type="PDB" id="2CWM">
    <property type="method" value="X-ray"/>
    <property type="resolution" value="1.95 A"/>
    <property type="chains" value="A/D=1-236"/>
</dbReference>
<dbReference type="PDB" id="2OW4">
    <property type="method" value="X-ray"/>
    <property type="resolution" value="1.60 A"/>
    <property type="chains" value="A=1-236"/>
</dbReference>
<dbReference type="PDB" id="2P34">
    <property type="method" value="X-ray"/>
    <property type="resolution" value="2.10 A"/>
    <property type="chains" value="A/B/C/D=1-236"/>
</dbReference>
<dbReference type="PDB" id="2P37">
    <property type="method" value="X-ray"/>
    <property type="resolution" value="2.10 A"/>
    <property type="chains" value="A/B/C/D=1-236"/>
</dbReference>
<dbReference type="PDBsum" id="2CWM"/>
<dbReference type="PDBsum" id="2OW4"/>
<dbReference type="PDBsum" id="2P34"/>
<dbReference type="PDBsum" id="2P37"/>
<dbReference type="SMR" id="P81364"/>
<dbReference type="UniLectin" id="P81364"/>
<dbReference type="EvolutionaryTrace" id="P81364"/>
<dbReference type="GO" id="GO:0005537">
    <property type="term" value="F:D-mannose binding"/>
    <property type="evidence" value="ECO:0007669"/>
    <property type="project" value="UniProtKB-KW"/>
</dbReference>
<dbReference type="GO" id="GO:0046872">
    <property type="term" value="F:metal ion binding"/>
    <property type="evidence" value="ECO:0007669"/>
    <property type="project" value="UniProtKB-KW"/>
</dbReference>
<dbReference type="FunFam" id="2.60.120.200:FF:000227">
    <property type="entry name" value="Concanavalin-A"/>
    <property type="match status" value="1"/>
</dbReference>
<dbReference type="Gene3D" id="2.60.120.200">
    <property type="match status" value="1"/>
</dbReference>
<dbReference type="InterPro" id="IPR013320">
    <property type="entry name" value="ConA-like_dom_sf"/>
</dbReference>
<dbReference type="InterPro" id="IPR000985">
    <property type="entry name" value="Lectin_LegA_CS"/>
</dbReference>
<dbReference type="InterPro" id="IPR019825">
    <property type="entry name" value="Lectin_legB_Mn/Ca_BS"/>
</dbReference>
<dbReference type="InterPro" id="IPR001220">
    <property type="entry name" value="Legume_lectin_dom"/>
</dbReference>
<dbReference type="InterPro" id="IPR050258">
    <property type="entry name" value="Leguminous_Lectin"/>
</dbReference>
<dbReference type="PANTHER" id="PTHR32401">
    <property type="entry name" value="CONCANAVALIN A-LIKE LECTIN FAMILY PROTEIN"/>
    <property type="match status" value="1"/>
</dbReference>
<dbReference type="PANTHER" id="PTHR32401:SF47">
    <property type="entry name" value="LEGUME LECTIN DOMAIN-CONTAINING PROTEIN"/>
    <property type="match status" value="1"/>
</dbReference>
<dbReference type="Pfam" id="PF00139">
    <property type="entry name" value="Lectin_legB"/>
    <property type="match status" value="2"/>
</dbReference>
<dbReference type="SUPFAM" id="SSF49899">
    <property type="entry name" value="Concanavalin A-like lectins/glucanases"/>
    <property type="match status" value="1"/>
</dbReference>
<dbReference type="PROSITE" id="PS00308">
    <property type="entry name" value="LECTIN_LEGUME_ALPHA"/>
    <property type="match status" value="1"/>
</dbReference>
<dbReference type="PROSITE" id="PS00307">
    <property type="entry name" value="LECTIN_LEGUME_BETA"/>
    <property type="match status" value="1"/>
</dbReference>
<name>CONA_CANRO</name>
<evidence type="ECO:0000250" key="1"/>
<evidence type="ECO:0000305" key="2"/>
<evidence type="ECO:0007829" key="3">
    <source>
        <dbReference type="PDB" id="2CWM"/>
    </source>
</evidence>
<evidence type="ECO:0007829" key="4">
    <source>
        <dbReference type="PDB" id="2OW4"/>
    </source>
</evidence>
<sequence>ADTIVAVELDTYPNTDVGDPSYPHXXXXXXSVRXXTAKWNMQNGKVGTAHISYNSVGKRLSAVVSYPNGDSATVSYDVDLDNVLPEWVRVGLSASTGLYKETNTILSWSFTSKLKSNSTHETNALHFMFNQFTKDQKDLILQSDATTGTDGNLXXTRVSSNGPSQGSTVGRALFYAPVHIWESSATVAGFDATFXXLIKSPDSHPADGIAFFISNIDSSIPSGSTGRLLGLFPDAN</sequence>
<organism>
    <name type="scientific">Canavalia rosea</name>
    <name type="common">Beach bean</name>
    <name type="synonym">Canavalia maritima</name>
    <dbReference type="NCBI Taxonomy" id="3825"/>
    <lineage>
        <taxon>Eukaryota</taxon>
        <taxon>Viridiplantae</taxon>
        <taxon>Streptophyta</taxon>
        <taxon>Embryophyta</taxon>
        <taxon>Tracheophyta</taxon>
        <taxon>Spermatophyta</taxon>
        <taxon>Magnoliopsida</taxon>
        <taxon>eudicotyledons</taxon>
        <taxon>Gunneridae</taxon>
        <taxon>Pentapetalae</taxon>
        <taxon>rosids</taxon>
        <taxon>fabids</taxon>
        <taxon>Fabales</taxon>
        <taxon>Fabaceae</taxon>
        <taxon>Papilionoideae</taxon>
        <taxon>50 kb inversion clade</taxon>
        <taxon>NPAAA clade</taxon>
        <taxon>indigoferoid/millettioid clade</taxon>
        <taxon>Phaseoleae</taxon>
        <taxon>Canavalia</taxon>
    </lineage>
</organism>
<proteinExistence type="evidence at protein level"/>
<accession>P81364</accession>
<reference key="1">
    <citation type="journal article" date="1991" name="Phytochemistry">
        <title>Comparison of the amino acid sequences of the lectins from seeds of Dioclea lehmanni and Canavalia maritima.</title>
        <authorList>
            <person name="Perez G."/>
            <person name="Perez C."/>
            <person name="Sousa-Cavada B."/>
            <person name="Moreira R."/>
            <person name="Richardson M."/>
        </authorList>
    </citation>
    <scope>PROTEIN SEQUENCE</scope>
</reference>